<proteinExistence type="inferred from homology"/>
<name>ARGC_MYCBT</name>
<comment type="function">
    <text evidence="1">Catalyzes the NADPH-dependent reduction of N-acetyl-5-glutamyl phosphate to yield N-acetyl-L-glutamate 5-semialdehyde.</text>
</comment>
<comment type="catalytic activity">
    <reaction evidence="1">
        <text>N-acetyl-L-glutamate 5-semialdehyde + phosphate + NADP(+) = N-acetyl-L-glutamyl 5-phosphate + NADPH + H(+)</text>
        <dbReference type="Rhea" id="RHEA:21588"/>
        <dbReference type="ChEBI" id="CHEBI:15378"/>
        <dbReference type="ChEBI" id="CHEBI:29123"/>
        <dbReference type="ChEBI" id="CHEBI:43474"/>
        <dbReference type="ChEBI" id="CHEBI:57783"/>
        <dbReference type="ChEBI" id="CHEBI:57936"/>
        <dbReference type="ChEBI" id="CHEBI:58349"/>
        <dbReference type="EC" id="1.2.1.38"/>
    </reaction>
</comment>
<comment type="pathway">
    <text evidence="1">Amino-acid biosynthesis; L-arginine biosynthesis; N(2)-acetyl-L-ornithine from L-glutamate: step 3/4.</text>
</comment>
<comment type="subcellular location">
    <subcellularLocation>
        <location evidence="1">Cytoplasm</location>
    </subcellularLocation>
</comment>
<comment type="similarity">
    <text evidence="1">Belongs to the NAGSA dehydrogenase family. Type 1 subfamily.</text>
</comment>
<sequence>MQNRQVANATKVAVAGASGYAGGEILRLLLGHPAYADGRLRIGALTAATSAGSTLGEHHPHLTPLAHRVVEPTEAAVLGGHDAVFLALPHGHSAVLAQQLSPETLIIDCGADFRLTDAAVWERFYGSSHAGSWPYGLPELPGARDQLRGTRRIAVPGCYPTAALLALFPALAADLIEPAVTVVAVSGTSGAGRAATTDLLGAEVIGSARAYNIAGVHRHTPEIAQGLRAVTDRDVSVSFTPVLIPASRGILATCTARTRSPLSQLRAAYEKAYHAEPFIYLMPEGQLPRTGAVIGSNAAHIAVAVDEDAQTFVAIAAIDNLVKGTAGAAVQSMNLALGWPETDGLSVVGVAP</sequence>
<gene>
    <name evidence="1" type="primary">argC</name>
    <name type="ordered locus">JTY_1666</name>
</gene>
<organism>
    <name type="scientific">Mycobacterium bovis (strain BCG / Tokyo 172 / ATCC 35737 / TMC 1019)</name>
    <dbReference type="NCBI Taxonomy" id="561275"/>
    <lineage>
        <taxon>Bacteria</taxon>
        <taxon>Bacillati</taxon>
        <taxon>Actinomycetota</taxon>
        <taxon>Actinomycetes</taxon>
        <taxon>Mycobacteriales</taxon>
        <taxon>Mycobacteriaceae</taxon>
        <taxon>Mycobacterium</taxon>
        <taxon>Mycobacterium tuberculosis complex</taxon>
    </lineage>
</organism>
<accession>C1ANS5</accession>
<feature type="chain" id="PRO_1000123247" description="N-acetyl-gamma-glutamyl-phosphate reductase">
    <location>
        <begin position="1"/>
        <end position="352"/>
    </location>
</feature>
<feature type="active site" evidence="1">
    <location>
        <position position="158"/>
    </location>
</feature>
<protein>
    <recommendedName>
        <fullName evidence="1">N-acetyl-gamma-glutamyl-phosphate reductase</fullName>
        <shortName evidence="1">AGPR</shortName>
        <ecNumber evidence="1">1.2.1.38</ecNumber>
    </recommendedName>
    <alternativeName>
        <fullName evidence="1">N-acetyl-glutamate semialdehyde dehydrogenase</fullName>
        <shortName evidence="1">NAGSA dehydrogenase</shortName>
    </alternativeName>
</protein>
<evidence type="ECO:0000255" key="1">
    <source>
        <dbReference type="HAMAP-Rule" id="MF_00150"/>
    </source>
</evidence>
<reference key="1">
    <citation type="journal article" date="2009" name="Vaccine">
        <title>Whole genome sequence analysis of Mycobacterium bovis bacillus Calmette-Guerin (BCG) Tokyo 172: a comparative study of BCG vaccine substrains.</title>
        <authorList>
            <person name="Seki M."/>
            <person name="Honda I."/>
            <person name="Fujita I."/>
            <person name="Yano I."/>
            <person name="Yamamoto S."/>
            <person name="Koyama A."/>
        </authorList>
    </citation>
    <scope>NUCLEOTIDE SEQUENCE [LARGE SCALE GENOMIC DNA]</scope>
    <source>
        <strain>BCG / Tokyo 172 / ATCC 35737 / TMC 1019</strain>
    </source>
</reference>
<dbReference type="EC" id="1.2.1.38" evidence="1"/>
<dbReference type="EMBL" id="AP010918">
    <property type="protein sequence ID" value="BAH25954.1"/>
    <property type="molecule type" value="Genomic_DNA"/>
</dbReference>
<dbReference type="RefSeq" id="WP_003898960.1">
    <property type="nucleotide sequence ID" value="NZ_CP014566.1"/>
</dbReference>
<dbReference type="SMR" id="C1ANS5"/>
<dbReference type="GeneID" id="45425622"/>
<dbReference type="KEGG" id="mbt:JTY_1666"/>
<dbReference type="HOGENOM" id="CLU_006384_0_0_11"/>
<dbReference type="UniPathway" id="UPA00068">
    <property type="reaction ID" value="UER00108"/>
</dbReference>
<dbReference type="GO" id="GO:0005737">
    <property type="term" value="C:cytoplasm"/>
    <property type="evidence" value="ECO:0007669"/>
    <property type="project" value="UniProtKB-SubCell"/>
</dbReference>
<dbReference type="GO" id="GO:0003942">
    <property type="term" value="F:N-acetyl-gamma-glutamyl-phosphate reductase activity"/>
    <property type="evidence" value="ECO:0007669"/>
    <property type="project" value="UniProtKB-UniRule"/>
</dbReference>
<dbReference type="GO" id="GO:0051287">
    <property type="term" value="F:NAD binding"/>
    <property type="evidence" value="ECO:0007669"/>
    <property type="project" value="InterPro"/>
</dbReference>
<dbReference type="GO" id="GO:0070401">
    <property type="term" value="F:NADP+ binding"/>
    <property type="evidence" value="ECO:0007669"/>
    <property type="project" value="InterPro"/>
</dbReference>
<dbReference type="GO" id="GO:0006526">
    <property type="term" value="P:L-arginine biosynthetic process"/>
    <property type="evidence" value="ECO:0007669"/>
    <property type="project" value="UniProtKB-UniRule"/>
</dbReference>
<dbReference type="CDD" id="cd24148">
    <property type="entry name" value="AGPR_1_actinobacAGPR_like"/>
    <property type="match status" value="1"/>
</dbReference>
<dbReference type="CDD" id="cd23934">
    <property type="entry name" value="AGPR_1_C"/>
    <property type="match status" value="1"/>
</dbReference>
<dbReference type="FunFam" id="3.30.360.10:FF:000014">
    <property type="entry name" value="N-acetyl-gamma-glutamyl-phosphate reductase"/>
    <property type="match status" value="1"/>
</dbReference>
<dbReference type="Gene3D" id="3.30.360.10">
    <property type="entry name" value="Dihydrodipicolinate Reductase, domain 2"/>
    <property type="match status" value="1"/>
</dbReference>
<dbReference type="Gene3D" id="3.40.50.720">
    <property type="entry name" value="NAD(P)-binding Rossmann-like Domain"/>
    <property type="match status" value="1"/>
</dbReference>
<dbReference type="HAMAP" id="MF_00150">
    <property type="entry name" value="ArgC_type1"/>
    <property type="match status" value="1"/>
</dbReference>
<dbReference type="InterPro" id="IPR023013">
    <property type="entry name" value="AGPR_AS"/>
</dbReference>
<dbReference type="InterPro" id="IPR000706">
    <property type="entry name" value="AGPR_type-1"/>
</dbReference>
<dbReference type="InterPro" id="IPR036291">
    <property type="entry name" value="NAD(P)-bd_dom_sf"/>
</dbReference>
<dbReference type="InterPro" id="IPR050085">
    <property type="entry name" value="NAGSA_dehydrogenase"/>
</dbReference>
<dbReference type="InterPro" id="IPR000534">
    <property type="entry name" value="Semialdehyde_DH_NAD-bd"/>
</dbReference>
<dbReference type="NCBIfam" id="TIGR01850">
    <property type="entry name" value="argC"/>
    <property type="match status" value="1"/>
</dbReference>
<dbReference type="PANTHER" id="PTHR32338:SF10">
    <property type="entry name" value="N-ACETYL-GAMMA-GLUTAMYL-PHOSPHATE REDUCTASE, CHLOROPLASTIC-RELATED"/>
    <property type="match status" value="1"/>
</dbReference>
<dbReference type="PANTHER" id="PTHR32338">
    <property type="entry name" value="N-ACETYL-GAMMA-GLUTAMYL-PHOSPHATE REDUCTASE, CHLOROPLASTIC-RELATED-RELATED"/>
    <property type="match status" value="1"/>
</dbReference>
<dbReference type="Pfam" id="PF01118">
    <property type="entry name" value="Semialdhyde_dh"/>
    <property type="match status" value="1"/>
</dbReference>
<dbReference type="Pfam" id="PF22698">
    <property type="entry name" value="Semialdhyde_dhC_1"/>
    <property type="match status" value="1"/>
</dbReference>
<dbReference type="SMART" id="SM00859">
    <property type="entry name" value="Semialdhyde_dh"/>
    <property type="match status" value="1"/>
</dbReference>
<dbReference type="SUPFAM" id="SSF55347">
    <property type="entry name" value="Glyceraldehyde-3-phosphate dehydrogenase-like, C-terminal domain"/>
    <property type="match status" value="1"/>
</dbReference>
<dbReference type="SUPFAM" id="SSF51735">
    <property type="entry name" value="NAD(P)-binding Rossmann-fold domains"/>
    <property type="match status" value="1"/>
</dbReference>
<dbReference type="PROSITE" id="PS01224">
    <property type="entry name" value="ARGC"/>
    <property type="match status" value="1"/>
</dbReference>
<keyword id="KW-0028">Amino-acid biosynthesis</keyword>
<keyword id="KW-0055">Arginine biosynthesis</keyword>
<keyword id="KW-0963">Cytoplasm</keyword>
<keyword id="KW-0521">NADP</keyword>
<keyword id="KW-0560">Oxidoreductase</keyword>